<sequence>MRRRSRMLLCFAFLWVLGIAYYMYSGGGSALAGGAGGGAGRKEDWNEIDPIKKKDLHHSNGEEKAQSMETLPPGKVRWPDFNQEAYVGGTMVRSGQDPYARNKFNQVESDKLRMDRAIPDTRHDQCQRKQWRVDLPATSVVITFHNEARSALLRTVVSVLKKSPPHLIKEIILVDDYSNDPEDGALLGKIEKVRVLRNDRREGLMRSRVRGADAAQAKVLTFLDSHCECNEHWLEPLLERVAEDRTRVVSPIIDVINMDNFQYVGASADLKGGFDWNLVFKWDYMTPEQRRSRQGNPVAPIKTPMIAGGLFVMDKFYFEELGKYDMMMDVWGGENLEISFRVWQCGGSLEIIPCSRVGHVFRKQHPYTFPGGSGTVFARNTRRAAEVWMDEYKNFYYAAVPSARNVPYGNIQSRLELRKKLSCKPFKWYLENVYPELRVPDHQDIAFGALQQGTNCLDTLGHFADGVVGVYECHNAGGNQEWALTKEKSVKHMDLCLTVVDRAPGSLIKLQGCRENDSRQKWEQIEGNSKLRHVGSNLCLDSRTAKSGGLSVEVCGPALSQQWKFTLNLQQ</sequence>
<reference key="1">
    <citation type="journal article" date="1995" name="J. Biol. Chem.">
        <title>Purification and cDNA cloning of a human UDP-N-acetyl-alpha-D-galactosamine:polypeptide N-acetylgalactosaminyltransferase.</title>
        <authorList>
            <person name="White T."/>
            <person name="Bennett E.P."/>
            <person name="Takio K."/>
            <person name="Soerensen T."/>
            <person name="Bonding N."/>
            <person name="Clausen H."/>
        </authorList>
    </citation>
    <scope>NUCLEOTIDE SEQUENCE [MRNA] (ISOFORM 1)</scope>
    <scope>PROTEIN SEQUENCE OF 52-93; 104-120; 170-182; 193-218; 303-323; 421-424 AND 510-546</scope>
    <scope>FUNCTION</scope>
    <scope>COFACTOR</scope>
    <scope>CATALYTIC ACTIVITY</scope>
    <scope>PATHWAY</scope>
    <scope>TISSUE SPECIFICITY</scope>
    <source>
        <tissue>Gastric carcinoma</tissue>
    </source>
</reference>
<reference key="2">
    <citation type="journal article" date="2004" name="Nat. Genet.">
        <title>Complete sequencing and characterization of 21,243 full-length human cDNAs.</title>
        <authorList>
            <person name="Ota T."/>
            <person name="Suzuki Y."/>
            <person name="Nishikawa T."/>
            <person name="Otsuki T."/>
            <person name="Sugiyama T."/>
            <person name="Irie R."/>
            <person name="Wakamatsu A."/>
            <person name="Hayashi K."/>
            <person name="Sato H."/>
            <person name="Nagai K."/>
            <person name="Kimura K."/>
            <person name="Makita H."/>
            <person name="Sekine M."/>
            <person name="Obayashi M."/>
            <person name="Nishi T."/>
            <person name="Shibahara T."/>
            <person name="Tanaka T."/>
            <person name="Ishii S."/>
            <person name="Yamamoto J."/>
            <person name="Saito K."/>
            <person name="Kawai Y."/>
            <person name="Isono Y."/>
            <person name="Nakamura Y."/>
            <person name="Nagahari K."/>
            <person name="Murakami K."/>
            <person name="Yasuda T."/>
            <person name="Iwayanagi T."/>
            <person name="Wagatsuma M."/>
            <person name="Shiratori A."/>
            <person name="Sudo H."/>
            <person name="Hosoiri T."/>
            <person name="Kaku Y."/>
            <person name="Kodaira H."/>
            <person name="Kondo H."/>
            <person name="Sugawara M."/>
            <person name="Takahashi M."/>
            <person name="Kanda K."/>
            <person name="Yokoi T."/>
            <person name="Furuya T."/>
            <person name="Kikkawa E."/>
            <person name="Omura Y."/>
            <person name="Abe K."/>
            <person name="Kamihara K."/>
            <person name="Katsuta N."/>
            <person name="Sato K."/>
            <person name="Tanikawa M."/>
            <person name="Yamazaki M."/>
            <person name="Ninomiya K."/>
            <person name="Ishibashi T."/>
            <person name="Yamashita H."/>
            <person name="Murakawa K."/>
            <person name="Fujimori K."/>
            <person name="Tanai H."/>
            <person name="Kimata M."/>
            <person name="Watanabe M."/>
            <person name="Hiraoka S."/>
            <person name="Chiba Y."/>
            <person name="Ishida S."/>
            <person name="Ono Y."/>
            <person name="Takiguchi S."/>
            <person name="Watanabe S."/>
            <person name="Yosida M."/>
            <person name="Hotuta T."/>
            <person name="Kusano J."/>
            <person name="Kanehori K."/>
            <person name="Takahashi-Fujii A."/>
            <person name="Hara H."/>
            <person name="Tanase T.-O."/>
            <person name="Nomura Y."/>
            <person name="Togiya S."/>
            <person name="Komai F."/>
            <person name="Hara R."/>
            <person name="Takeuchi K."/>
            <person name="Arita M."/>
            <person name="Imose N."/>
            <person name="Musashino K."/>
            <person name="Yuuki H."/>
            <person name="Oshima A."/>
            <person name="Sasaki N."/>
            <person name="Aotsuka S."/>
            <person name="Yoshikawa Y."/>
            <person name="Matsunawa H."/>
            <person name="Ichihara T."/>
            <person name="Shiohata N."/>
            <person name="Sano S."/>
            <person name="Moriya S."/>
            <person name="Momiyama H."/>
            <person name="Satoh N."/>
            <person name="Takami S."/>
            <person name="Terashima Y."/>
            <person name="Suzuki O."/>
            <person name="Nakagawa S."/>
            <person name="Senoh A."/>
            <person name="Mizoguchi H."/>
            <person name="Goto Y."/>
            <person name="Shimizu F."/>
            <person name="Wakebe H."/>
            <person name="Hishigaki H."/>
            <person name="Watanabe T."/>
            <person name="Sugiyama A."/>
            <person name="Takemoto M."/>
            <person name="Kawakami B."/>
            <person name="Yamazaki M."/>
            <person name="Watanabe K."/>
            <person name="Kumagai A."/>
            <person name="Itakura S."/>
            <person name="Fukuzumi Y."/>
            <person name="Fujimori Y."/>
            <person name="Komiyama M."/>
            <person name="Tashiro H."/>
            <person name="Tanigami A."/>
            <person name="Fujiwara T."/>
            <person name="Ono T."/>
            <person name="Yamada K."/>
            <person name="Fujii Y."/>
            <person name="Ozaki K."/>
            <person name="Hirao M."/>
            <person name="Ohmori Y."/>
            <person name="Kawabata A."/>
            <person name="Hikiji T."/>
            <person name="Kobatake N."/>
            <person name="Inagaki H."/>
            <person name="Ikema Y."/>
            <person name="Okamoto S."/>
            <person name="Okitani R."/>
            <person name="Kawakami T."/>
            <person name="Noguchi S."/>
            <person name="Itoh T."/>
            <person name="Shigeta K."/>
            <person name="Senba T."/>
            <person name="Matsumura K."/>
            <person name="Nakajima Y."/>
            <person name="Mizuno T."/>
            <person name="Morinaga M."/>
            <person name="Sasaki M."/>
            <person name="Togashi T."/>
            <person name="Oyama M."/>
            <person name="Hata H."/>
            <person name="Watanabe M."/>
            <person name="Komatsu T."/>
            <person name="Mizushima-Sugano J."/>
            <person name="Satoh T."/>
            <person name="Shirai Y."/>
            <person name="Takahashi Y."/>
            <person name="Nakagawa K."/>
            <person name="Okumura K."/>
            <person name="Nagase T."/>
            <person name="Nomura N."/>
            <person name="Kikuchi H."/>
            <person name="Masuho Y."/>
            <person name="Yamashita R."/>
            <person name="Nakai K."/>
            <person name="Yada T."/>
            <person name="Nakamura Y."/>
            <person name="Ohara O."/>
            <person name="Isogai T."/>
            <person name="Sugano S."/>
        </authorList>
    </citation>
    <scope>NUCLEOTIDE SEQUENCE [LARGE SCALE MRNA] (ISOFORMS 1 AND 2)</scope>
    <scope>VARIANT MET-554</scope>
    <source>
        <tissue>Hippocampus</tissue>
        <tissue>Trachea</tissue>
    </source>
</reference>
<reference key="3">
    <citation type="journal article" date="2006" name="Nature">
        <title>The DNA sequence and biological annotation of human chromosome 1.</title>
        <authorList>
            <person name="Gregory S.G."/>
            <person name="Barlow K.F."/>
            <person name="McLay K.E."/>
            <person name="Kaul R."/>
            <person name="Swarbreck D."/>
            <person name="Dunham A."/>
            <person name="Scott C.E."/>
            <person name="Howe K.L."/>
            <person name="Woodfine K."/>
            <person name="Spencer C.C.A."/>
            <person name="Jones M.C."/>
            <person name="Gillson C."/>
            <person name="Searle S."/>
            <person name="Zhou Y."/>
            <person name="Kokocinski F."/>
            <person name="McDonald L."/>
            <person name="Evans R."/>
            <person name="Phillips K."/>
            <person name="Atkinson A."/>
            <person name="Cooper R."/>
            <person name="Jones C."/>
            <person name="Hall R.E."/>
            <person name="Andrews T.D."/>
            <person name="Lloyd C."/>
            <person name="Ainscough R."/>
            <person name="Almeida J.P."/>
            <person name="Ambrose K.D."/>
            <person name="Anderson F."/>
            <person name="Andrew R.W."/>
            <person name="Ashwell R.I.S."/>
            <person name="Aubin K."/>
            <person name="Babbage A.K."/>
            <person name="Bagguley C.L."/>
            <person name="Bailey J."/>
            <person name="Beasley H."/>
            <person name="Bethel G."/>
            <person name="Bird C.P."/>
            <person name="Bray-Allen S."/>
            <person name="Brown J.Y."/>
            <person name="Brown A.J."/>
            <person name="Buckley D."/>
            <person name="Burton J."/>
            <person name="Bye J."/>
            <person name="Carder C."/>
            <person name="Chapman J.C."/>
            <person name="Clark S.Y."/>
            <person name="Clarke G."/>
            <person name="Clee C."/>
            <person name="Cobley V."/>
            <person name="Collier R.E."/>
            <person name="Corby N."/>
            <person name="Coville G.J."/>
            <person name="Davies J."/>
            <person name="Deadman R."/>
            <person name="Dunn M."/>
            <person name="Earthrowl M."/>
            <person name="Ellington A.G."/>
            <person name="Errington H."/>
            <person name="Frankish A."/>
            <person name="Frankland J."/>
            <person name="French L."/>
            <person name="Garner P."/>
            <person name="Garnett J."/>
            <person name="Gay L."/>
            <person name="Ghori M.R.J."/>
            <person name="Gibson R."/>
            <person name="Gilby L.M."/>
            <person name="Gillett W."/>
            <person name="Glithero R.J."/>
            <person name="Grafham D.V."/>
            <person name="Griffiths C."/>
            <person name="Griffiths-Jones S."/>
            <person name="Grocock R."/>
            <person name="Hammond S."/>
            <person name="Harrison E.S.I."/>
            <person name="Hart E."/>
            <person name="Haugen E."/>
            <person name="Heath P.D."/>
            <person name="Holmes S."/>
            <person name="Holt K."/>
            <person name="Howden P.J."/>
            <person name="Hunt A.R."/>
            <person name="Hunt S.E."/>
            <person name="Hunter G."/>
            <person name="Isherwood J."/>
            <person name="James R."/>
            <person name="Johnson C."/>
            <person name="Johnson D."/>
            <person name="Joy A."/>
            <person name="Kay M."/>
            <person name="Kershaw J.K."/>
            <person name="Kibukawa M."/>
            <person name="Kimberley A.M."/>
            <person name="King A."/>
            <person name="Knights A.J."/>
            <person name="Lad H."/>
            <person name="Laird G."/>
            <person name="Lawlor S."/>
            <person name="Leongamornlert D.A."/>
            <person name="Lloyd D.M."/>
            <person name="Loveland J."/>
            <person name="Lovell J."/>
            <person name="Lush M.J."/>
            <person name="Lyne R."/>
            <person name="Martin S."/>
            <person name="Mashreghi-Mohammadi M."/>
            <person name="Matthews L."/>
            <person name="Matthews N.S.W."/>
            <person name="McLaren S."/>
            <person name="Milne S."/>
            <person name="Mistry S."/>
            <person name="Moore M.J.F."/>
            <person name="Nickerson T."/>
            <person name="O'Dell C.N."/>
            <person name="Oliver K."/>
            <person name="Palmeiri A."/>
            <person name="Palmer S.A."/>
            <person name="Parker A."/>
            <person name="Patel D."/>
            <person name="Pearce A.V."/>
            <person name="Peck A.I."/>
            <person name="Pelan S."/>
            <person name="Phelps K."/>
            <person name="Phillimore B.J."/>
            <person name="Plumb R."/>
            <person name="Rajan J."/>
            <person name="Raymond C."/>
            <person name="Rouse G."/>
            <person name="Saenphimmachak C."/>
            <person name="Sehra H.K."/>
            <person name="Sheridan E."/>
            <person name="Shownkeen R."/>
            <person name="Sims S."/>
            <person name="Skuce C.D."/>
            <person name="Smith M."/>
            <person name="Steward C."/>
            <person name="Subramanian S."/>
            <person name="Sycamore N."/>
            <person name="Tracey A."/>
            <person name="Tromans A."/>
            <person name="Van Helmond Z."/>
            <person name="Wall M."/>
            <person name="Wallis J.M."/>
            <person name="White S."/>
            <person name="Whitehead S.L."/>
            <person name="Wilkinson J.E."/>
            <person name="Willey D.L."/>
            <person name="Williams H."/>
            <person name="Wilming L."/>
            <person name="Wray P.W."/>
            <person name="Wu Z."/>
            <person name="Coulson A."/>
            <person name="Vaudin M."/>
            <person name="Sulston J.E."/>
            <person name="Durbin R.M."/>
            <person name="Hubbard T."/>
            <person name="Wooster R."/>
            <person name="Dunham I."/>
            <person name="Carter N.P."/>
            <person name="McVean G."/>
            <person name="Ross M.T."/>
            <person name="Harrow J."/>
            <person name="Olson M.V."/>
            <person name="Beck S."/>
            <person name="Rogers J."/>
            <person name="Bentley D.R."/>
        </authorList>
    </citation>
    <scope>NUCLEOTIDE SEQUENCE [LARGE SCALE GENOMIC DNA]</scope>
</reference>
<reference key="4">
    <citation type="submission" date="2005-07" db="EMBL/GenBank/DDBJ databases">
        <authorList>
            <person name="Mural R.J."/>
            <person name="Istrail S."/>
            <person name="Sutton G.G."/>
            <person name="Florea L."/>
            <person name="Halpern A.L."/>
            <person name="Mobarry C.M."/>
            <person name="Lippert R."/>
            <person name="Walenz B."/>
            <person name="Shatkay H."/>
            <person name="Dew I."/>
            <person name="Miller J.R."/>
            <person name="Flanigan M.J."/>
            <person name="Edwards N.J."/>
            <person name="Bolanos R."/>
            <person name="Fasulo D."/>
            <person name="Halldorsson B.V."/>
            <person name="Hannenhalli S."/>
            <person name="Turner R."/>
            <person name="Yooseph S."/>
            <person name="Lu F."/>
            <person name="Nusskern D.R."/>
            <person name="Shue B.C."/>
            <person name="Zheng X.H."/>
            <person name="Zhong F."/>
            <person name="Delcher A.L."/>
            <person name="Huson D.H."/>
            <person name="Kravitz S.A."/>
            <person name="Mouchard L."/>
            <person name="Reinert K."/>
            <person name="Remington K.A."/>
            <person name="Clark A.G."/>
            <person name="Waterman M.S."/>
            <person name="Eichler E.E."/>
            <person name="Adams M.D."/>
            <person name="Hunkapiller M.W."/>
            <person name="Myers E.W."/>
            <person name="Venter J.C."/>
        </authorList>
    </citation>
    <scope>NUCLEOTIDE SEQUENCE [LARGE SCALE GENOMIC DNA]</scope>
</reference>
<reference key="5">
    <citation type="submission" date="2008-12" db="EMBL/GenBank/DDBJ databases">
        <authorList>
            <consortium name="NHLBI resequencing and genotyping service (RS&amp;G)"/>
        </authorList>
    </citation>
    <scope>NUCLEOTIDE SEQUENCE [GENOMIC DNA]</scope>
</reference>
<reference key="6">
    <citation type="journal article" date="2004" name="Genome Res.">
        <title>The status, quality, and expansion of the NIH full-length cDNA project: the Mammalian Gene Collection (MGC).</title>
        <authorList>
            <consortium name="The MGC Project Team"/>
        </authorList>
    </citation>
    <scope>NUCLEOTIDE SEQUENCE [LARGE SCALE MRNA] (ISOFORM 1)</scope>
    <source>
        <tissue>Lymph</tissue>
    </source>
</reference>
<reference key="7">
    <citation type="journal article" date="1997" name="J. Biol. Chem.">
        <title>Substrate specificities of three members of the human UDP-N-acetyl-alpha-D-galactosamine:polypeptide N-acetylgalactosaminyltransferase family, GalNAc-T1, -T2, and -T3.</title>
        <authorList>
            <person name="Wandall H.H."/>
            <person name="Hassan H."/>
            <person name="Mirgorodskaya E."/>
            <person name="Kristensen A.K."/>
            <person name="Roepstorff P."/>
            <person name="Bennett E.P."/>
            <person name="Nielsen P.A."/>
            <person name="Hollingsworth M.A."/>
            <person name="Burchell J."/>
            <person name="Taylor-Papadimitriou J."/>
            <person name="Clausen H."/>
        </authorList>
    </citation>
    <scope>FUNCTION</scope>
</reference>
<reference key="8">
    <citation type="journal article" date="1998" name="J. Cell Sci.">
        <title>Localization of three human polypeptide GalNAc-transferases in HeLa cells suggests initiation of O-linked glycosylation throughout the Golgi apparatus.</title>
        <authorList>
            <person name="Roettger S."/>
            <person name="White J."/>
            <person name="Wandall H.H."/>
            <person name="Olivo J.-C."/>
            <person name="Stark A."/>
            <person name="Bennett E.P."/>
            <person name="Whitehouse C."/>
            <person name="Berger E.G."/>
            <person name="Clausen H."/>
            <person name="Nilsson T."/>
        </authorList>
    </citation>
    <scope>SUBCELLULAR LOCATION</scope>
</reference>
<reference key="9">
    <citation type="journal article" date="2003" name="J. Biol. Chem.">
        <title>Initiation of O-glycan synthesis in IgA1 hinge region is determined by a single enzyme, UDP-N-acetyl-alpha-D-galactosamine:polypeptide N-acetylgalactosaminyltransferase 2.</title>
        <authorList>
            <person name="Iwasaki H."/>
            <person name="Zhang Y."/>
            <person name="Tachibana K."/>
            <person name="Gotoh M."/>
            <person name="Kikuchi N."/>
            <person name="Kwon Y.-D."/>
            <person name="Togayachi A."/>
            <person name="Kudo T."/>
            <person name="Kubota T."/>
            <person name="Narimatsu H."/>
        </authorList>
    </citation>
    <scope>FUNCTION</scope>
</reference>
<reference key="10">
    <citation type="journal article" date="2006" name="Glycobiology">
        <title>Chemoenzymatically synthesized multimeric Tn/STn MUC1 glycopeptides elicit cancer-specific anti-MUC1 antibody responses and override tolerance.</title>
        <authorList>
            <person name="Soerensen A.L."/>
            <person name="Reis C.A."/>
            <person name="Tarp M.A."/>
            <person name="Mandel U."/>
            <person name="Ramachandran K."/>
            <person name="Sankaranarayanan V."/>
            <person name="Schwientek T."/>
            <person name="Graham R."/>
            <person name="Taylor-Papadimitriou J."/>
            <person name="Hollingsworth M.A."/>
            <person name="Burchell J."/>
            <person name="Clausen H."/>
        </authorList>
    </citation>
    <scope>FUNCTION</scope>
    <scope>CATALYTIC ACTIVITY</scope>
</reference>
<reference key="11">
    <citation type="journal article" date="2011" name="BMC Syst. Biol.">
        <title>Initial characterization of the human central proteome.</title>
        <authorList>
            <person name="Burkard T.R."/>
            <person name="Planyavsky M."/>
            <person name="Kaupe I."/>
            <person name="Breitwieser F.P."/>
            <person name="Buerckstuemmer T."/>
            <person name="Bennett K.L."/>
            <person name="Superti-Furga G."/>
            <person name="Colinge J."/>
        </authorList>
    </citation>
    <scope>IDENTIFICATION BY MASS SPECTROMETRY [LARGE SCALE ANALYSIS]</scope>
</reference>
<reference key="12">
    <citation type="journal article" date="2013" name="J. Proteome Res.">
        <title>Toward a comprehensive characterization of a human cancer cell phosphoproteome.</title>
        <authorList>
            <person name="Zhou H."/>
            <person name="Di Palma S."/>
            <person name="Preisinger C."/>
            <person name="Peng M."/>
            <person name="Polat A.N."/>
            <person name="Heck A.J."/>
            <person name="Mohammed S."/>
        </authorList>
    </citation>
    <scope>PHOSPHORYLATION [LARGE SCALE ANALYSIS] AT SER-536</scope>
    <scope>IDENTIFICATION BY MASS SPECTROMETRY [LARGE SCALE ANALYSIS]</scope>
    <source>
        <tissue>Erythroleukemia</tissue>
    </source>
</reference>
<reference key="13">
    <citation type="journal article" date="2014" name="J. Proteomics">
        <title>An enzyme assisted RP-RPLC approach for in-depth analysis of human liver phosphoproteome.</title>
        <authorList>
            <person name="Bian Y."/>
            <person name="Song C."/>
            <person name="Cheng K."/>
            <person name="Dong M."/>
            <person name="Wang F."/>
            <person name="Huang J."/>
            <person name="Sun D."/>
            <person name="Wang L."/>
            <person name="Ye M."/>
            <person name="Zou H."/>
        </authorList>
    </citation>
    <scope>IDENTIFICATION BY MASS SPECTROMETRY [LARGE SCALE ANALYSIS]</scope>
    <source>
        <tissue>Liver</tissue>
    </source>
</reference>
<reference key="14">
    <citation type="journal article" date="2015" name="Proteomics">
        <title>N-terminome analysis of the human mitochondrial proteome.</title>
        <authorList>
            <person name="Vaca Jacome A.S."/>
            <person name="Rabilloud T."/>
            <person name="Schaeffer-Reiss C."/>
            <person name="Rompais M."/>
            <person name="Ayoub D."/>
            <person name="Lane L."/>
            <person name="Bairoch A."/>
            <person name="Van Dorsselaer A."/>
            <person name="Carapito C."/>
        </authorList>
    </citation>
    <scope>IDENTIFICATION BY MASS SPECTROMETRY [LARGE SCALE ANALYSIS]</scope>
</reference>
<reference key="15">
    <citation type="journal article" date="2023" name="Mol. Cell. Proteomics">
        <title>Mapping the Human Chondroitin Sulfate Glycoproteome Reveals an Unexpected Correlation Between Glycan Sulfation and Attachment Site Characteristics.</title>
        <authorList>
            <person name="Noborn F."/>
            <person name="Nilsson J."/>
            <person name="Sihlbom C."/>
            <person name="Nikpour M."/>
            <person name="Kjellen L."/>
            <person name="Larson G."/>
        </authorList>
    </citation>
    <scope>SUBCELLULAR LOCATION</scope>
    <scope>TISSUE SPECIFICITY</scope>
    <scope>GLYCOSYLATION AT SER-29</scope>
</reference>
<reference key="16">
    <citation type="journal article" date="2006" name="J. Biol. Chem.">
        <title>Dynamic association between the catalytic and lectin domains of human UDP-GalNAc:polypeptide alpha-N-acetylgalactosaminyltransferase-2.</title>
        <authorList>
            <person name="Fritz T.A."/>
            <person name="Raman J."/>
            <person name="Tabak L.A."/>
        </authorList>
    </citation>
    <scope>X-RAY CRYSTALLOGRAPHY (1.64 ANGSTROMS) OF 75-571 IN COMPLEX WITH UDP; PEPTIDE SUBSTRATE AND MANGANESE</scope>
    <scope>FUNCTION</scope>
    <scope>CATALYTIC ACTIVITY</scope>
    <scope>COFACTOR</scope>
    <scope>PATHWAY</scope>
    <scope>DISULFIDE BONDS</scope>
</reference>
<reference evidence="21 22 23" key="17">
    <citation type="journal article" date="2014" name="Angew. Chem. Int. Ed. Engl.">
        <title>Substrate-guided front-face reaction revealed by combined structural snapshots and metadynamics for the polypeptide N-acetylgalactosaminyltransferase2.</title>
        <authorList>
            <person name="Lira-Navarrete E."/>
            <person name="Iglesias-Fernandez J."/>
            <person name="Zandberg W.F."/>
            <person name="Companon I."/>
            <person name="Kong Y."/>
            <person name="Corzana F."/>
            <person name="Pinto B.M."/>
            <person name="Clausen H."/>
            <person name="Peregrina J.M."/>
            <person name="Vocadlo D.J."/>
            <person name="Rovira C."/>
            <person name="Hurtado-Guerrero R."/>
        </authorList>
    </citation>
    <scope>X-RAY CRYSTALLOGRAPHY (2.20 ANGSTROMS) IN COMPLEXES WITH SUBSTRATE ANALOGS AND MANGANESE</scope>
    <scope>COFACTOR</scope>
    <scope>DISULFIDE BONDS</scope>
</reference>
<reference evidence="24 25 26" key="18">
    <citation type="journal article" date="2015" name="Nat. Commun.">
        <title>Dynamic interplay between catalytic and lectin domains of GalNAc-transferases modulates protein O-glycosylation.</title>
        <authorList>
            <person name="Lira-Navarrete E."/>
            <person name="de Las Rivas M."/>
            <person name="Companon I."/>
            <person name="Pallares M.C."/>
            <person name="Kong Y."/>
            <person name="Iglesias-Fernandez J."/>
            <person name="Bernardes G.J."/>
            <person name="Peregrina J.M."/>
            <person name="Rovira C."/>
            <person name="Bernado P."/>
            <person name="Bruscolini P."/>
            <person name="Clausen H."/>
            <person name="Lostao A."/>
            <person name="Corzana F."/>
            <person name="Hurtado-Guerrero R."/>
        </authorList>
    </citation>
    <scope>X-RAY CRYSTALLOGRAPHY (1.48 ANGSTROMS) IN COMPLEXES WITH MANGANESE AND SUBSTRATES</scope>
    <scope>FUNCTION</scope>
    <scope>CATALYTIC ACTIVITY</scope>
    <scope>COFACTOR</scope>
    <scope>PATHWAY</scope>
    <scope>MUTAGENESIS OF TRP-282 AND PHE-361</scope>
    <scope>DISULFIDE BONDS</scope>
</reference>
<reference key="19">
    <citation type="journal article" date="2016" name="Cell Metab.">
        <title>Loss of function of GALNT2 lowers high-density lipoproteins in humans, nonhuman primates, and rodents.</title>
        <authorList>
            <consortium name="Myocardial Infarction Exome Sequencing Study"/>
            <person name="Khetarpal S.A."/>
            <person name="Schjoldager K.T."/>
            <person name="Christoffersen C."/>
            <person name="Raghavan A."/>
            <person name="Edmondson A.C."/>
            <person name="Reutter H.M."/>
            <person name="Ahmed B."/>
            <person name="Ouazzani R."/>
            <person name="Peloso G.M."/>
            <person name="Vitali C."/>
            <person name="Zhao W."/>
            <person name="Somasundara A.V."/>
            <person name="Millar J.S."/>
            <person name="Park Y."/>
            <person name="Fernando G."/>
            <person name="Livanov V."/>
            <person name="Choi S."/>
            <person name="Noe E."/>
            <person name="Patel P."/>
            <person name="Ho S.P."/>
            <person name="Kirchgessner T.G."/>
            <person name="Wandall H.H."/>
            <person name="Hansen L."/>
            <person name="Bennett E.P."/>
            <person name="Vakhrushev S.Y."/>
            <person name="Saleheen D."/>
            <person name="Kathiresan S."/>
            <person name="Brown C.D."/>
            <person name="Abou Jamra R."/>
            <person name="LeGuern E."/>
            <person name="Clausen H."/>
            <person name="Rader D.J."/>
        </authorList>
    </citation>
    <scope>VARIANTS CDG2T SER-104 AND 289-GLN--GLN-571 DEL</scope>
    <scope>CHARACTERIZATION OF VARIANTS CDG2T SER-104 AND 289-GLN--GLN-571 DEL</scope>
    <scope>INVOLVEMENT IN CDG2T</scope>
    <scope>FUNCTION</scope>
</reference>
<reference key="20">
    <citation type="journal article" date="2020" name="Brain">
        <title>Novel congenital disorder of O-linked glycosylation caused by GALNT2 loss of function.</title>
        <authorList>
            <person name="Zilmer M."/>
            <person name="Edmondson A.C."/>
            <person name="Khetarpal S.A."/>
            <person name="Alesi V."/>
            <person name="Zaki M.S."/>
            <person name="Rostasy K."/>
            <person name="Madsen C.G."/>
            <person name="Lepri F.R."/>
            <person name="Sinibaldi L."/>
            <person name="Cusmai R."/>
            <person name="Novelli A."/>
            <person name="Issa M.Y."/>
            <person name="Fenger C.D."/>
            <person name="Abou Jamra R."/>
            <person name="Reutter H."/>
            <person name="Briuglia S."/>
            <person name="Agolini E."/>
            <person name="Hansen L."/>
            <person name="Petaejae-Repo U.E."/>
            <person name="Hintze J."/>
            <person name="Raymond K.M."/>
            <person name="Liedtke K."/>
            <person name="Stanley V."/>
            <person name="Musaev D."/>
            <person name="Gleeson J.G."/>
            <person name="Vitali C."/>
            <person name="O'Brien W.T."/>
            <person name="Gardella E."/>
            <person name="Rubboli G."/>
            <person name="Rader D.J."/>
            <person name="Schjoldager K.T."/>
            <person name="Moeller R.S."/>
        </authorList>
    </citation>
    <scope>VARIANTS CDG2T 200-ARG--GLN-571 DEL; PRO-210 AND 289-GLN--GLN-571 DEL</scope>
    <scope>CHARACTERIZATION OF VARIANTS CDG2T 200-ARG--GLN-571 DEL; PRO-210 AND 289-GLN--GLN-571 DEL</scope>
    <scope>VARIANTS ARG-271 AND VAL-493</scope>
    <scope>CHARACTERIZATION OF VARIANTS ARG-271 AND VAL-493</scope>
    <scope>FUNCTION</scope>
</reference>
<protein>
    <recommendedName>
        <fullName>Polypeptide N-acetylgalactosaminyltransferase 2</fullName>
        <ecNumber evidence="8 10 14">2.4.1.41</ecNumber>
    </recommendedName>
    <alternativeName>
        <fullName>Polypeptide GalNAc transferase 2</fullName>
        <shortName>GalNAc-T2</shortName>
        <shortName>pp-GaNTase 2</shortName>
    </alternativeName>
    <alternativeName>
        <fullName>Protein-UDP acetylgalactosaminyltransferase 2</fullName>
    </alternativeName>
    <alternativeName>
        <fullName>UDP-GalNAc:polypeptide N-acetylgalactosaminyltransferase 2</fullName>
    </alternativeName>
    <component>
        <recommendedName>
            <fullName>Polypeptide N-acetylgalactosaminyltransferase 2 soluble form</fullName>
        </recommendedName>
    </component>
</protein>
<organism>
    <name type="scientific">Homo sapiens</name>
    <name type="common">Human</name>
    <dbReference type="NCBI Taxonomy" id="9606"/>
    <lineage>
        <taxon>Eukaryota</taxon>
        <taxon>Metazoa</taxon>
        <taxon>Chordata</taxon>
        <taxon>Craniata</taxon>
        <taxon>Vertebrata</taxon>
        <taxon>Euteleostomi</taxon>
        <taxon>Mammalia</taxon>
        <taxon>Eutheria</taxon>
        <taxon>Euarchontoglires</taxon>
        <taxon>Primates</taxon>
        <taxon>Haplorrhini</taxon>
        <taxon>Catarrhini</taxon>
        <taxon>Hominidae</taxon>
        <taxon>Homo</taxon>
    </lineage>
</organism>
<gene>
    <name type="primary">GALNT2</name>
</gene>
<comment type="function">
    <text evidence="5 7 8 10 11 12 14 15">Catalyzes the initial reaction in O-linked oligosaccharide biosynthesis, the transfer of an N-acetyl-D-galactosamine residue to a serine or threonine residue on the protein receptor. Has a broad spectrum of substrates for peptides such as EA2, Muc5AC, Muc1a, Muc1b. Probably involved in O-linked glycosylation of the immunoglobulin A1 (IgA1) hinge region. Involved in O-linked glycosylation of APOC-III, ANGPTL3 and PLTP. It participates in the regulation of HDL-C metabolism (PubMed:27508872, PubMed:32293671).</text>
</comment>
<comment type="catalytic activity">
    <reaction evidence="7 8 10 14">
        <text>L-seryl-[protein] + UDP-N-acetyl-alpha-D-galactosamine = a 3-O-[N-acetyl-alpha-D-galactosaminyl]-L-seryl-[protein] + UDP + H(+)</text>
        <dbReference type="Rhea" id="RHEA:23956"/>
        <dbReference type="Rhea" id="RHEA-COMP:9863"/>
        <dbReference type="Rhea" id="RHEA-COMP:12788"/>
        <dbReference type="ChEBI" id="CHEBI:15378"/>
        <dbReference type="ChEBI" id="CHEBI:29999"/>
        <dbReference type="ChEBI" id="CHEBI:53604"/>
        <dbReference type="ChEBI" id="CHEBI:58223"/>
        <dbReference type="ChEBI" id="CHEBI:67138"/>
        <dbReference type="EC" id="2.4.1.41"/>
    </reaction>
</comment>
<comment type="catalytic activity">
    <reaction evidence="7 8 10 14">
        <text>L-threonyl-[protein] + UDP-N-acetyl-alpha-D-galactosamine = a 3-O-[N-acetyl-alpha-D-galactosaminyl]-L-threonyl-[protein] + UDP + H(+)</text>
        <dbReference type="Rhea" id="RHEA:52424"/>
        <dbReference type="Rhea" id="RHEA-COMP:11060"/>
        <dbReference type="Rhea" id="RHEA-COMP:11689"/>
        <dbReference type="ChEBI" id="CHEBI:15378"/>
        <dbReference type="ChEBI" id="CHEBI:30013"/>
        <dbReference type="ChEBI" id="CHEBI:58223"/>
        <dbReference type="ChEBI" id="CHEBI:67138"/>
        <dbReference type="ChEBI" id="CHEBI:87075"/>
        <dbReference type="EC" id="2.4.1.41"/>
    </reaction>
</comment>
<comment type="cofactor">
    <cofactor evidence="8 9 10 14">
        <name>Mn(2+)</name>
        <dbReference type="ChEBI" id="CHEBI:29035"/>
    </cofactor>
</comment>
<comment type="pathway">
    <text evidence="8 10 14">Protein modification; protein glycosylation.</text>
</comment>
<comment type="interaction">
    <interactant intactId="EBI-10226985">
        <id>Q10471</id>
    </interactant>
    <interactant intactId="EBI-747430">
        <id>Q9BXK5</id>
        <label>BCL2L13</label>
    </interactant>
    <organismsDiffer>false</organismsDiffer>
    <experiments>3</experiments>
</comment>
<comment type="interaction">
    <interactant intactId="EBI-10226985">
        <id>Q10471</id>
    </interactant>
    <interactant intactId="EBI-724524">
        <id>O75208</id>
        <label>COQ9</label>
    </interactant>
    <organismsDiffer>false</organismsDiffer>
    <experiments>3</experiments>
</comment>
<comment type="interaction">
    <interactant intactId="EBI-10226985">
        <id>Q10471</id>
    </interactant>
    <interactant intactId="EBI-749265">
        <id>Q8N6L0</id>
        <label>KASH5</label>
    </interactant>
    <organismsDiffer>false</organismsDiffer>
    <experiments>8</experiments>
</comment>
<comment type="interaction">
    <interactant intactId="EBI-10226985">
        <id>Q10471</id>
    </interactant>
    <interactant intactId="EBI-1045440">
        <id>Q9HC36</id>
        <label>MRM3</label>
    </interactant>
    <organismsDiffer>false</organismsDiffer>
    <experiments>3</experiments>
</comment>
<comment type="interaction">
    <interactant intactId="EBI-10226985">
        <id>Q10471</id>
    </interactant>
    <interactant intactId="EBI-7445625">
        <id>Q9HC29</id>
        <label>NOD2</label>
    </interactant>
    <organismsDiffer>false</organismsDiffer>
    <experiments>2</experiments>
</comment>
<comment type="subcellular location">
    <subcellularLocation>
        <location evidence="16">Golgi apparatus</location>
        <location evidence="16">Golgi stack membrane</location>
        <topology evidence="16">Single-pass type II membrane protein</topology>
    </subcellularLocation>
    <subcellularLocation>
        <location evidence="13 16">Secreted</location>
    </subcellularLocation>
    <text>Resides preferentially in the trans and medial parts of the Golgi stack. A secreted form also exists.</text>
</comment>
<comment type="alternative products">
    <event type="alternative splicing"/>
    <isoform>
        <id>Q10471-1</id>
        <name>1</name>
        <sequence type="displayed"/>
    </isoform>
    <isoform>
        <id>Q10471-2</id>
        <name>2</name>
        <sequence type="described" ref="VSP_056491 VSP_056492 VSP_056493"/>
    </isoform>
</comment>
<comment type="tissue specificity">
    <text evidence="13 14">Detected in urine (at protein level) (PubMed:37453717). Widely expressed.</text>
</comment>
<comment type="domain">
    <text evidence="1">There are two conserved domains in the glycosyltransferase region: the N-terminal domain (domain A, also called GT1 motif), which is probably involved in manganese coordination and substrate binding and the C-terminal domain (domain B, also called Gal/GalNAc-T motif), which is probably involved in catalytic reaction and UDP-Gal binding.</text>
</comment>
<comment type="domain">
    <text evidence="1">The ricin B-type lectin domain binds to GalNAc and contributes to the glycopeptide specificity.</text>
</comment>
<comment type="disease" evidence="11 12">
    <disease id="DI-05843">
        <name>Congenital disorder of glycosylation 2T</name>
        <acronym>CDG2T</acronym>
        <description>A form of congenital disorder of glycosylation, a genetically heterogeneous group of multisystem disorders caused by a defect in glycoprotein biosynthesis and characterized by under-glycosylated serum glycoproteins. Congenital disorders of glycosylation result in a wide variety of clinical features, such as defects in the nervous system development, psychomotor retardation, dysmorphic features, hypotonia, coagulation disorders, and immunodeficiency. The broad spectrum of features reflects the critical role of N-glycoproteins during embryonic development, differentiation, and maintenance of cell functions. CDG2T is an autosomal recessive form characterized by global developmental delay, intellectual disability with language deficit, autistic features, behavioral abnormalities, epilepsy, chronic insomnia, white matter changes on brain imaging, dysmorphic features, decreased stature, and decreased high density lipoprotein cholesterol levels.</description>
        <dbReference type="MIM" id="618885"/>
    </disease>
    <text>The disease is caused by variants affecting the gene represented in this entry.</text>
</comment>
<comment type="similarity">
    <text evidence="18">Belongs to the glycosyltransferase 2 family. GalNAc-T subfamily.</text>
</comment>
<comment type="online information" name="Functional Glycomics Gateway - GTase">
    <link uri="http://www.functionalglycomics.org/glycomics/molecule/jsp/glycoEnzyme/viewGlycoEnzyme.jsp?gbpId=gt_hum_484"/>
    <text>Polypeptide N-acetylgalactosaminyltransferase 2</text>
</comment>
<name>GALT2_HUMAN</name>
<feature type="chain" id="PRO_0000223391" description="Polypeptide N-acetylgalactosaminyltransferase 2">
    <location>
        <begin position="1"/>
        <end position="571"/>
    </location>
</feature>
<feature type="chain" id="PRO_0000012265" description="Polypeptide N-acetylgalactosaminyltransferase 2 soluble form">
    <location>
        <begin position="52"/>
        <end position="571"/>
    </location>
</feature>
<feature type="topological domain" description="Cytoplasmic" evidence="2">
    <location>
        <begin position="1"/>
        <end position="6"/>
    </location>
</feature>
<feature type="transmembrane region" description="Helical; Signal-anchor for type II membrane protein" evidence="2">
    <location>
        <begin position="7"/>
        <end position="24"/>
    </location>
</feature>
<feature type="topological domain" description="Lumenal" evidence="2">
    <location>
        <begin position="25"/>
        <end position="571"/>
    </location>
</feature>
<feature type="domain" description="Ricin B-type lectin" evidence="3">
    <location>
        <begin position="443"/>
        <end position="566"/>
    </location>
</feature>
<feature type="region of interest" description="Disordered" evidence="4">
    <location>
        <begin position="53"/>
        <end position="74"/>
    </location>
</feature>
<feature type="region of interest" description="Catalytic subdomain A">
    <location>
        <begin position="135"/>
        <end position="240"/>
    </location>
</feature>
<feature type="region of interest" description="Catalytic subdomain B">
    <location>
        <begin position="300"/>
        <end position="362"/>
    </location>
</feature>
<feature type="compositionally biased region" description="Basic and acidic residues" evidence="4">
    <location>
        <begin position="53"/>
        <end position="66"/>
    </location>
</feature>
<feature type="binding site" evidence="8 9 10 19 20 21 23 26 27">
    <location>
        <position position="143"/>
    </location>
    <ligand>
        <name>substrate</name>
    </ligand>
</feature>
<feature type="binding site" evidence="8 9 10 19 20 21 23 26 27">
    <location>
        <position position="176"/>
    </location>
    <ligand>
        <name>substrate</name>
    </ligand>
</feature>
<feature type="binding site" evidence="8 9 10 19 20 21 23 26 27">
    <location>
        <position position="201"/>
    </location>
    <ligand>
        <name>substrate</name>
    </ligand>
</feature>
<feature type="binding site" evidence="8 9 10 19 20 21 22 23 26 27">
    <location>
        <position position="224"/>
    </location>
    <ligand>
        <name>Mn(2+)</name>
        <dbReference type="ChEBI" id="CHEBI:29035"/>
    </ligand>
</feature>
<feature type="binding site" evidence="8 9 10 19 20 21 23 26 27">
    <location>
        <position position="225"/>
    </location>
    <ligand>
        <name>substrate</name>
    </ligand>
</feature>
<feature type="binding site" evidence="8 9 10 19 20 21 22 23 26 27">
    <location>
        <position position="226"/>
    </location>
    <ligand>
        <name>Mn(2+)</name>
        <dbReference type="ChEBI" id="CHEBI:29035"/>
    </ligand>
</feature>
<feature type="binding site" evidence="8 9 10 19 20 21 23 26 27">
    <location>
        <position position="331"/>
    </location>
    <ligand>
        <name>substrate</name>
    </ligand>
</feature>
<feature type="binding site" evidence="8 9 10 19 20 21 22 23 26 27">
    <location>
        <position position="359"/>
    </location>
    <ligand>
        <name>Mn(2+)</name>
        <dbReference type="ChEBI" id="CHEBI:29035"/>
    </ligand>
</feature>
<feature type="binding site" evidence="8 9 10 19 20 21 23 26 27">
    <location>
        <position position="362"/>
    </location>
    <ligand>
        <name>substrate</name>
    </ligand>
</feature>
<feature type="binding site" evidence="8 9 10 19 20 21 23 26 27">
    <location>
        <position position="365"/>
    </location>
    <ligand>
        <name>substrate</name>
    </ligand>
</feature>
<feature type="binding site" evidence="8 9 10 19 20 21 22 23 24 25 26 27 28 29">
    <location>
        <position position="367"/>
    </location>
    <ligand>
        <name>substrate</name>
    </ligand>
</feature>
<feature type="site" description="Not glycosylated">
    <location>
        <position position="516"/>
    </location>
</feature>
<feature type="modified residue" description="Phosphoserine" evidence="30">
    <location>
        <position position="536"/>
    </location>
</feature>
<feature type="glycosylation site" description="O-linked (Xyl...) (chondroitin sulfate) serine" evidence="13">
    <location>
        <position position="29"/>
    </location>
</feature>
<feature type="disulfide bond" evidence="3 8 9 10 19 20 21 22 23 24 25 26 27 28 29">
    <location>
        <begin position="126"/>
        <end position="354"/>
    </location>
</feature>
<feature type="disulfide bond" evidence="3 8 9 10 19 20 21 22 23 24 25 26 27 28 29">
    <location>
        <begin position="345"/>
        <end position="423"/>
    </location>
</feature>
<feature type="disulfide bond" evidence="3 8 9 10 19 20 21 22 23 24 25 26 27 28 29">
    <location>
        <begin position="456"/>
        <end position="473"/>
    </location>
</feature>
<feature type="disulfide bond" evidence="3 8 9 10 19 20 21 22 23 24 25 26 27 28 29">
    <location>
        <begin position="496"/>
        <end position="513"/>
    </location>
</feature>
<feature type="disulfide bond" evidence="3 8 9 10 19 20 21 22 23 24 25 26 27 28 29">
    <location>
        <begin position="539"/>
        <end position="555"/>
    </location>
</feature>
<feature type="splice variant" id="VSP_056491" description="In isoform 2." evidence="17">
    <location>
        <begin position="1"/>
        <end position="90"/>
    </location>
</feature>
<feature type="splice variant" id="VSP_056492" description="In isoform 2." evidence="17">
    <original>TPMIAGGLFVMDKFYFEELGKYDMMMDVWGGENLEISFRVWQCGGSLEIIPCS</original>
    <variation>DLVPRVAVWWQPGDHPVQPCGTRVPEAAPLHVPGWQWHCLCPKHPPGSRGLDG</variation>
    <location>
        <begin position="303"/>
        <end position="355"/>
    </location>
</feature>
<feature type="splice variant" id="VSP_056493" description="In isoform 2." evidence="17">
    <location>
        <begin position="356"/>
        <end position="571"/>
    </location>
</feature>
<feature type="sequence variant" id="VAR_084283" description="In CDG2T; loss-of-function variant resulting in lack of ApoC-III and IgA1 glycosylation; dbSNP:rs1663960324." evidence="11">
    <original>F</original>
    <variation>S</variation>
    <location>
        <position position="104"/>
    </location>
</feature>
<feature type="sequence variant" id="VAR_084284" description="In CDG2T; loss of ApoC-III glycosylation." evidence="12">
    <location>
        <begin position="200"/>
        <end position="571"/>
    </location>
</feature>
<feature type="sequence variant" id="VAR_084285" description="In CDG2T; loss of ApoC-III glycosylation; dbSNP:rs376870425." evidence="12">
    <original>R</original>
    <variation>P</variation>
    <location>
        <position position="210"/>
    </location>
</feature>
<feature type="sequence variant" id="VAR_049240" description="In dbSNP:rs1923950.">
    <original>R</original>
    <variation>H</variation>
    <location>
        <position position="245"/>
    </location>
</feature>
<feature type="sequence variant" id="VAR_084286" description="Found in a patient with multiple abnormalities including neonatal hypotonia, psychomotor delay, feeding difficulty and dysmorphic features; likely benign; does not affect ApoC-III glycosylation." evidence="12">
    <original>K</original>
    <variation>R</variation>
    <location>
        <position position="271"/>
    </location>
</feature>
<feature type="sequence variant" id="VAR_084287" description="In CDG2T; loss-of-function variant resulting in lack of ApoC-III glycosylation." evidence="11 12">
    <location>
        <begin position="289"/>
        <end position="571"/>
    </location>
</feature>
<feature type="sequence variant" id="VAR_084288" description="Found in a patient with multiple abnormalities including neonatal hypotonia, psychomotor delay, feeding difficulty and dysmorphic features; likely benign; does not affect ApoC-III glycosylation; dbSNP:rs774570005." evidence="12">
    <original>M</original>
    <variation>V</variation>
    <location>
        <position position="493"/>
    </location>
</feature>
<feature type="sequence variant" id="VAR_019575" description="In dbSNP:rs2273970." evidence="6">
    <original>V</original>
    <variation>M</variation>
    <location>
        <position position="554"/>
    </location>
</feature>
<feature type="mutagenesis site" description="Loss of enzyme activity." evidence="10">
    <original>W</original>
    <variation>A</variation>
    <location>
        <position position="282"/>
    </location>
</feature>
<feature type="mutagenesis site" description="Loss of enzyme activity." evidence="10">
    <original>F</original>
    <variation>A</variation>
    <location>
        <position position="361"/>
    </location>
</feature>
<feature type="sequence conflict" description="In Ref. 1; AA sequence." evidence="18" ref="1">
    <original>T</original>
    <variation>G</variation>
    <location>
        <position position="70"/>
    </location>
</feature>
<feature type="sequence conflict" description="In Ref. 1; AA sequence." evidence="18" ref="1">
    <original>W</original>
    <variation>D</variation>
    <location>
        <position position="78"/>
    </location>
</feature>
<feature type="sequence conflict" description="In Ref. 1; AA sequence." evidence="18" ref="1">
    <original>R</original>
    <variation>G</variation>
    <location>
        <position position="93"/>
    </location>
</feature>
<feature type="sequence conflict" description="In Ref. 1; AA sequence." evidence="18" ref="1">
    <original>R</original>
    <variation>W</variation>
    <location>
        <position position="210"/>
    </location>
</feature>
<feature type="sequence conflict" description="In Ref. 1; AA sequence." evidence="18" ref="1">
    <original>RR</original>
    <variation>SC</variation>
    <location>
        <begin position="290"/>
        <end position="291"/>
    </location>
</feature>
<feature type="sequence conflict" description="In Ref. 1; AA sequence." evidence="18" ref="1">
    <original>R</original>
    <variation>Q</variation>
    <location>
        <position position="293"/>
    </location>
</feature>
<feature type="sequence conflict" description="In Ref. 1; AA sequence." evidence="18" ref="1">
    <original>P</original>
    <variation>H</variation>
    <location>
        <position position="300"/>
    </location>
</feature>
<feature type="sequence conflict" description="In Ref. 1; AA sequence." evidence="18" ref="1">
    <original>W</original>
    <variation>A</variation>
    <location>
        <position position="522"/>
    </location>
</feature>
<feature type="sequence conflict" description="In Ref. 1; AA sequence." evidence="18" ref="1">
    <original>H</original>
    <variation>M</variation>
    <location>
        <position position="533"/>
    </location>
</feature>
<feature type="helix" evidence="31">
    <location>
        <begin position="78"/>
        <end position="80"/>
    </location>
</feature>
<feature type="helix" evidence="31">
    <location>
        <begin position="83"/>
        <end position="87"/>
    </location>
</feature>
<feature type="helix" evidence="31">
    <location>
        <begin position="88"/>
        <end position="90"/>
    </location>
</feature>
<feature type="turn" evidence="31">
    <location>
        <begin position="98"/>
        <end position="102"/>
    </location>
</feature>
<feature type="helix" evidence="31">
    <location>
        <begin position="106"/>
        <end position="111"/>
    </location>
</feature>
<feature type="helix" evidence="31">
    <location>
        <begin position="124"/>
        <end position="128"/>
    </location>
</feature>
<feature type="strand" evidence="31">
    <location>
        <begin position="138"/>
        <end position="146"/>
    </location>
</feature>
<feature type="helix" evidence="31">
    <location>
        <begin position="149"/>
        <end position="162"/>
    </location>
</feature>
<feature type="helix" evidence="31">
    <location>
        <begin position="165"/>
        <end position="167"/>
    </location>
</feature>
<feature type="strand" evidence="31">
    <location>
        <begin position="168"/>
        <end position="175"/>
    </location>
</feature>
<feature type="helix" evidence="31">
    <location>
        <begin position="182"/>
        <end position="185"/>
    </location>
</feature>
<feature type="helix" evidence="31">
    <location>
        <begin position="186"/>
        <end position="189"/>
    </location>
</feature>
<feature type="strand" evidence="31">
    <location>
        <begin position="193"/>
        <end position="197"/>
    </location>
</feature>
<feature type="helix" evidence="31">
    <location>
        <begin position="204"/>
        <end position="214"/>
    </location>
</feature>
<feature type="strand" evidence="31">
    <location>
        <begin position="217"/>
        <end position="223"/>
    </location>
</feature>
<feature type="strand" evidence="31">
    <location>
        <begin position="225"/>
        <end position="229"/>
    </location>
</feature>
<feature type="helix" evidence="31">
    <location>
        <begin position="235"/>
        <end position="243"/>
    </location>
</feature>
<feature type="strand" evidence="31">
    <location>
        <begin position="247"/>
        <end position="256"/>
    </location>
</feature>
<feature type="turn" evidence="31">
    <location>
        <begin position="258"/>
        <end position="260"/>
    </location>
</feature>
<feature type="strand" evidence="31">
    <location>
        <begin position="270"/>
        <end position="274"/>
    </location>
</feature>
<feature type="strand" evidence="31">
    <location>
        <begin position="280"/>
        <end position="284"/>
    </location>
</feature>
<feature type="helix" evidence="31">
    <location>
        <begin position="287"/>
        <end position="295"/>
    </location>
</feature>
<feature type="strand" evidence="31">
    <location>
        <begin position="308"/>
        <end position="314"/>
    </location>
</feature>
<feature type="helix" evidence="31">
    <location>
        <begin position="315"/>
        <end position="320"/>
    </location>
</feature>
<feature type="strand" evidence="31">
    <location>
        <begin position="330"/>
        <end position="332"/>
    </location>
</feature>
<feature type="helix" evidence="31">
    <location>
        <begin position="336"/>
        <end position="344"/>
    </location>
</feature>
<feature type="strand" evidence="31">
    <location>
        <begin position="348"/>
        <end position="360"/>
    </location>
</feature>
<feature type="strand" evidence="31">
    <location>
        <begin position="363"/>
        <end position="365"/>
    </location>
</feature>
<feature type="turn" evidence="32">
    <location>
        <begin position="366"/>
        <end position="368"/>
    </location>
</feature>
<feature type="strand" evidence="31">
    <location>
        <begin position="369"/>
        <end position="371"/>
    </location>
</feature>
<feature type="helix" evidence="31">
    <location>
        <begin position="373"/>
        <end position="376"/>
    </location>
</feature>
<feature type="helix" evidence="31">
    <location>
        <begin position="378"/>
        <end position="388"/>
    </location>
</feature>
<feature type="helix" evidence="31">
    <location>
        <begin position="390"/>
        <end position="392"/>
    </location>
</feature>
<feature type="helix" evidence="31">
    <location>
        <begin position="393"/>
        <end position="399"/>
    </location>
</feature>
<feature type="helix" evidence="31">
    <location>
        <begin position="401"/>
        <end position="403"/>
    </location>
</feature>
<feature type="helix" evidence="31">
    <location>
        <begin position="412"/>
        <end position="420"/>
    </location>
</feature>
<feature type="helix" evidence="31">
    <location>
        <begin position="426"/>
        <end position="432"/>
    </location>
</feature>
<feature type="strand" evidence="31">
    <location>
        <begin position="445"/>
        <end position="452"/>
    </location>
</feature>
<feature type="strand" evidence="31">
    <location>
        <begin position="455"/>
        <end position="458"/>
    </location>
</feature>
<feature type="turn" evidence="32">
    <location>
        <begin position="463"/>
        <end position="465"/>
    </location>
</feature>
<feature type="strand" evidence="31">
    <location>
        <begin position="469"/>
        <end position="472"/>
    </location>
</feature>
<feature type="helix" evidence="31">
    <location>
        <begin position="478"/>
        <end position="480"/>
    </location>
</feature>
<feature type="strand" evidence="31">
    <location>
        <begin position="482"/>
        <end position="484"/>
    </location>
</feature>
<feature type="strand" evidence="31">
    <location>
        <begin position="490"/>
        <end position="492"/>
    </location>
</feature>
<feature type="strand" evidence="31">
    <location>
        <begin position="495"/>
        <end position="498"/>
    </location>
</feature>
<feature type="strand" evidence="31">
    <location>
        <begin position="509"/>
        <end position="512"/>
    </location>
</feature>
<feature type="helix" evidence="31">
    <location>
        <begin position="518"/>
        <end position="520"/>
    </location>
</feature>
<feature type="strand" evidence="31">
    <location>
        <begin position="522"/>
        <end position="525"/>
    </location>
</feature>
<feature type="turn" evidence="31">
    <location>
        <begin position="526"/>
        <end position="529"/>
    </location>
</feature>
<feature type="strand" evidence="31">
    <location>
        <begin position="530"/>
        <end position="533"/>
    </location>
</feature>
<feature type="strand" evidence="31">
    <location>
        <begin position="536"/>
        <end position="541"/>
    </location>
</feature>
<feature type="helix" evidence="31">
    <location>
        <begin position="545"/>
        <end position="547"/>
    </location>
</feature>
<feature type="strand" evidence="31">
    <location>
        <begin position="551"/>
        <end position="554"/>
    </location>
</feature>
<feature type="helix" evidence="31">
    <location>
        <begin position="559"/>
        <end position="561"/>
    </location>
</feature>
<feature type="strand" evidence="31">
    <location>
        <begin position="564"/>
        <end position="568"/>
    </location>
</feature>
<evidence type="ECO:0000250" key="1"/>
<evidence type="ECO:0000255" key="2"/>
<evidence type="ECO:0000255" key="3">
    <source>
        <dbReference type="PROSITE-ProRule" id="PRU00174"/>
    </source>
</evidence>
<evidence type="ECO:0000256" key="4">
    <source>
        <dbReference type="SAM" id="MobiDB-lite"/>
    </source>
</evidence>
<evidence type="ECO:0000269" key="5">
    <source>
    </source>
</evidence>
<evidence type="ECO:0000269" key="6">
    <source>
    </source>
</evidence>
<evidence type="ECO:0000269" key="7">
    <source>
    </source>
</evidence>
<evidence type="ECO:0000269" key="8">
    <source>
    </source>
</evidence>
<evidence type="ECO:0000269" key="9">
    <source>
    </source>
</evidence>
<evidence type="ECO:0000269" key="10">
    <source>
    </source>
</evidence>
<evidence type="ECO:0000269" key="11">
    <source>
    </source>
</evidence>
<evidence type="ECO:0000269" key="12">
    <source>
    </source>
</evidence>
<evidence type="ECO:0000269" key="13">
    <source>
    </source>
</evidence>
<evidence type="ECO:0000269" key="14">
    <source>
    </source>
</evidence>
<evidence type="ECO:0000269" key="15">
    <source>
    </source>
</evidence>
<evidence type="ECO:0000269" key="16">
    <source>
    </source>
</evidence>
<evidence type="ECO:0000303" key="17">
    <source>
    </source>
</evidence>
<evidence type="ECO:0000305" key="18"/>
<evidence type="ECO:0007744" key="19">
    <source>
        <dbReference type="PDB" id="2FFU"/>
    </source>
</evidence>
<evidence type="ECO:0007744" key="20">
    <source>
        <dbReference type="PDB" id="2FFV"/>
    </source>
</evidence>
<evidence type="ECO:0007744" key="21">
    <source>
        <dbReference type="PDB" id="4D0T"/>
    </source>
</evidence>
<evidence type="ECO:0007744" key="22">
    <source>
        <dbReference type="PDB" id="4D0Z"/>
    </source>
</evidence>
<evidence type="ECO:0007744" key="23">
    <source>
        <dbReference type="PDB" id="4D11"/>
    </source>
</evidence>
<evidence type="ECO:0007744" key="24">
    <source>
        <dbReference type="PDB" id="5AJN"/>
    </source>
</evidence>
<evidence type="ECO:0007744" key="25">
    <source>
        <dbReference type="PDB" id="5AJO"/>
    </source>
</evidence>
<evidence type="ECO:0007744" key="26">
    <source>
        <dbReference type="PDB" id="5AJP"/>
    </source>
</evidence>
<evidence type="ECO:0007744" key="27">
    <source>
        <dbReference type="PDB" id="5FV9"/>
    </source>
</evidence>
<evidence type="ECO:0007744" key="28">
    <source>
        <dbReference type="PDB" id="5NDF"/>
    </source>
</evidence>
<evidence type="ECO:0007744" key="29">
    <source>
        <dbReference type="PDB" id="6EGS"/>
    </source>
</evidence>
<evidence type="ECO:0007744" key="30">
    <source>
    </source>
</evidence>
<evidence type="ECO:0007829" key="31">
    <source>
        <dbReference type="PDB" id="5AJO"/>
    </source>
</evidence>
<evidence type="ECO:0007829" key="32">
    <source>
        <dbReference type="PDB" id="6EGS"/>
    </source>
</evidence>
<proteinExistence type="evidence at protein level"/>
<dbReference type="EC" id="2.4.1.41" evidence="8 10 14"/>
<dbReference type="EMBL" id="X85019">
    <property type="protein sequence ID" value="CAA59381.1"/>
    <property type="molecule type" value="mRNA"/>
</dbReference>
<dbReference type="EMBL" id="AK290048">
    <property type="protein sequence ID" value="BAF82737.1"/>
    <property type="molecule type" value="mRNA"/>
</dbReference>
<dbReference type="EMBL" id="AK304029">
    <property type="protein sequence ID" value="BAH14094.1"/>
    <property type="molecule type" value="mRNA"/>
</dbReference>
<dbReference type="EMBL" id="AL592228">
    <property type="status" value="NOT_ANNOTATED_CDS"/>
    <property type="molecule type" value="Genomic_DNA"/>
</dbReference>
<dbReference type="EMBL" id="AL078646">
    <property type="status" value="NOT_ANNOTATED_CDS"/>
    <property type="molecule type" value="Genomic_DNA"/>
</dbReference>
<dbReference type="EMBL" id="AL117349">
    <property type="status" value="NOT_ANNOTATED_CDS"/>
    <property type="molecule type" value="Genomic_DNA"/>
</dbReference>
<dbReference type="EMBL" id="AL136988">
    <property type="status" value="NOT_ANNOTATED_CDS"/>
    <property type="molecule type" value="Genomic_DNA"/>
</dbReference>
<dbReference type="EMBL" id="FJ515852">
    <property type="protein sequence ID" value="ACS13744.1"/>
    <property type="molecule type" value="Genomic_DNA"/>
</dbReference>
<dbReference type="EMBL" id="CH471098">
    <property type="protein sequence ID" value="EAW69911.1"/>
    <property type="molecule type" value="Genomic_DNA"/>
</dbReference>
<dbReference type="EMBL" id="BC041120">
    <property type="protein sequence ID" value="AAH41120.1"/>
    <property type="molecule type" value="mRNA"/>
</dbReference>
<dbReference type="CCDS" id="CCDS1582.1">
    <molecule id="Q10471-1"/>
</dbReference>
<dbReference type="PIR" id="I37405">
    <property type="entry name" value="I37405"/>
</dbReference>
<dbReference type="RefSeq" id="NP_001278795.1">
    <property type="nucleotide sequence ID" value="NM_001291866.1"/>
</dbReference>
<dbReference type="RefSeq" id="NP_004472.1">
    <molecule id="Q10471-1"/>
    <property type="nucleotide sequence ID" value="NM_004481.5"/>
</dbReference>
<dbReference type="PDB" id="2FFU">
    <property type="method" value="X-ray"/>
    <property type="resolution" value="1.64 A"/>
    <property type="chains" value="A=75-571"/>
</dbReference>
<dbReference type="PDB" id="2FFV">
    <property type="method" value="X-ray"/>
    <property type="resolution" value="2.75 A"/>
    <property type="chains" value="A/B=75-571"/>
</dbReference>
<dbReference type="PDB" id="4D0T">
    <property type="method" value="X-ray"/>
    <property type="resolution" value="2.45 A"/>
    <property type="chains" value="A/B/C/D/E/F=1-571"/>
</dbReference>
<dbReference type="PDB" id="4D0Z">
    <property type="method" value="X-ray"/>
    <property type="resolution" value="2.20 A"/>
    <property type="chains" value="A/B/C/D/E/F=1-571"/>
</dbReference>
<dbReference type="PDB" id="4D11">
    <property type="method" value="X-ray"/>
    <property type="resolution" value="2.85 A"/>
    <property type="chains" value="A/B/C/D/E/F=1-571"/>
</dbReference>
<dbReference type="PDB" id="5AJN">
    <property type="method" value="X-ray"/>
    <property type="resolution" value="1.67 A"/>
    <property type="chains" value="A=1-571"/>
</dbReference>
<dbReference type="PDB" id="5AJO">
    <property type="method" value="X-ray"/>
    <property type="resolution" value="1.48 A"/>
    <property type="chains" value="A=1-571"/>
</dbReference>
<dbReference type="PDB" id="5AJP">
    <property type="method" value="X-ray"/>
    <property type="resolution" value="1.65 A"/>
    <property type="chains" value="A=1-571"/>
</dbReference>
<dbReference type="PDB" id="5FV9">
    <property type="method" value="X-ray"/>
    <property type="resolution" value="2.07 A"/>
    <property type="chains" value="A/B/C/D/E/F=1-571"/>
</dbReference>
<dbReference type="PDB" id="5NDF">
    <property type="method" value="X-ray"/>
    <property type="resolution" value="2.30 A"/>
    <property type="chains" value="A/B/C/D/E/F=1-571"/>
</dbReference>
<dbReference type="PDB" id="6E7I">
    <property type="method" value="X-ray"/>
    <property type="resolution" value="1.80 A"/>
    <property type="chains" value="A=74-571"/>
</dbReference>
<dbReference type="PDB" id="6EGS">
    <property type="method" value="X-ray"/>
    <property type="resolution" value="2.70 A"/>
    <property type="chains" value="A/B=75-571"/>
</dbReference>
<dbReference type="PDB" id="6NQT">
    <property type="method" value="X-ray"/>
    <property type="resolution" value="3.05 A"/>
    <property type="chains" value="A/B/C/D/E/F=1-571"/>
</dbReference>
<dbReference type="PDBsum" id="2FFU"/>
<dbReference type="PDBsum" id="2FFV"/>
<dbReference type="PDBsum" id="4D0T"/>
<dbReference type="PDBsum" id="4D0Z"/>
<dbReference type="PDBsum" id="4D11"/>
<dbReference type="PDBsum" id="5AJN"/>
<dbReference type="PDBsum" id="5AJO"/>
<dbReference type="PDBsum" id="5AJP"/>
<dbReference type="PDBsum" id="5FV9"/>
<dbReference type="PDBsum" id="5NDF"/>
<dbReference type="PDBsum" id="6E7I"/>
<dbReference type="PDBsum" id="6EGS"/>
<dbReference type="PDBsum" id="6NQT"/>
<dbReference type="SMR" id="Q10471"/>
<dbReference type="BioGRID" id="108862">
    <property type="interactions" value="130"/>
</dbReference>
<dbReference type="FunCoup" id="Q10471">
    <property type="interactions" value="1312"/>
</dbReference>
<dbReference type="IntAct" id="Q10471">
    <property type="interactions" value="65"/>
</dbReference>
<dbReference type="MINT" id="Q10471"/>
<dbReference type="STRING" id="9606.ENSP00000355632"/>
<dbReference type="BindingDB" id="Q10471"/>
<dbReference type="ChEMBL" id="CHEMBL3713355"/>
<dbReference type="CAZy" id="CBM13">
    <property type="family name" value="Carbohydrate-Binding Module Family 13"/>
</dbReference>
<dbReference type="CAZy" id="GT27">
    <property type="family name" value="Glycosyltransferase Family 27"/>
</dbReference>
<dbReference type="UniLectin" id="Q10471"/>
<dbReference type="GlyCosmos" id="Q10471">
    <property type="glycosylation" value="1 site, 1 glycan"/>
</dbReference>
<dbReference type="GlyGen" id="Q10471">
    <property type="glycosylation" value="12 sites, 3 O-linked glycans (6 sites)"/>
</dbReference>
<dbReference type="iPTMnet" id="Q10471"/>
<dbReference type="PhosphoSitePlus" id="Q10471"/>
<dbReference type="SwissPalm" id="Q10471"/>
<dbReference type="BioMuta" id="GALNT2"/>
<dbReference type="DMDM" id="51315838"/>
<dbReference type="jPOST" id="Q10471"/>
<dbReference type="MassIVE" id="Q10471"/>
<dbReference type="PaxDb" id="9606-ENSP00000355632"/>
<dbReference type="PeptideAtlas" id="Q10471"/>
<dbReference type="ProteomicsDB" id="58854">
    <molecule id="Q10471-1"/>
</dbReference>
<dbReference type="ProteomicsDB" id="6986"/>
<dbReference type="Pumba" id="Q10471"/>
<dbReference type="Antibodypedia" id="2493">
    <property type="antibodies" value="170 antibodies from 28 providers"/>
</dbReference>
<dbReference type="DNASU" id="2590"/>
<dbReference type="Ensembl" id="ENST00000366672.5">
    <molecule id="Q10471-1"/>
    <property type="protein sequence ID" value="ENSP00000355632.4"/>
    <property type="gene ID" value="ENSG00000143641.10"/>
</dbReference>
<dbReference type="GeneID" id="2590"/>
<dbReference type="KEGG" id="hsa:2590"/>
<dbReference type="MANE-Select" id="ENST00000366672.5">
    <property type="protein sequence ID" value="ENSP00000355632.4"/>
    <property type="RefSeq nucleotide sequence ID" value="NM_004481.5"/>
    <property type="RefSeq protein sequence ID" value="NP_004472.1"/>
</dbReference>
<dbReference type="UCSC" id="uc010pwa.2">
    <molecule id="Q10471-1"/>
    <property type="organism name" value="human"/>
</dbReference>
<dbReference type="AGR" id="HGNC:4124"/>
<dbReference type="CTD" id="2590"/>
<dbReference type="DisGeNET" id="2590"/>
<dbReference type="GeneCards" id="GALNT2"/>
<dbReference type="HGNC" id="HGNC:4124">
    <property type="gene designation" value="GALNT2"/>
</dbReference>
<dbReference type="HPA" id="ENSG00000143641">
    <property type="expression patterns" value="Low tissue specificity"/>
</dbReference>
<dbReference type="MalaCards" id="GALNT2"/>
<dbReference type="MIM" id="602274">
    <property type="type" value="gene"/>
</dbReference>
<dbReference type="MIM" id="618885">
    <property type="type" value="phenotype"/>
</dbReference>
<dbReference type="neXtProt" id="NX_Q10471"/>
<dbReference type="OpenTargets" id="ENSG00000143641"/>
<dbReference type="PharmGKB" id="PA28537"/>
<dbReference type="VEuPathDB" id="HostDB:ENSG00000143641"/>
<dbReference type="eggNOG" id="KOG3738">
    <property type="taxonomic scope" value="Eukaryota"/>
</dbReference>
<dbReference type="GeneTree" id="ENSGT00940000156958"/>
<dbReference type="HOGENOM" id="CLU_013477_0_2_1"/>
<dbReference type="InParanoid" id="Q10471"/>
<dbReference type="OMA" id="QEWAFSK"/>
<dbReference type="OrthoDB" id="429263at2759"/>
<dbReference type="PAN-GO" id="Q10471">
    <property type="GO annotations" value="3 GO annotations based on evolutionary models"/>
</dbReference>
<dbReference type="PhylomeDB" id="Q10471"/>
<dbReference type="TreeFam" id="TF313267"/>
<dbReference type="BRENDA" id="2.4.1.41">
    <property type="organism ID" value="2681"/>
</dbReference>
<dbReference type="PathwayCommons" id="Q10471"/>
<dbReference type="Reactome" id="R-HSA-6811436">
    <property type="pathway name" value="COPI-independent Golgi-to-ER retrograde traffic"/>
</dbReference>
<dbReference type="Reactome" id="R-HSA-913709">
    <property type="pathway name" value="O-linked glycosylation of mucins"/>
</dbReference>
<dbReference type="SignaLink" id="Q10471"/>
<dbReference type="UniPathway" id="UPA00378"/>
<dbReference type="BioGRID-ORCS" id="2590">
    <property type="hits" value="18 hits in 1160 CRISPR screens"/>
</dbReference>
<dbReference type="ChiTaRS" id="GALNT2">
    <property type="organism name" value="human"/>
</dbReference>
<dbReference type="EvolutionaryTrace" id="Q10471"/>
<dbReference type="GeneWiki" id="GALNT2"/>
<dbReference type="GenomeRNAi" id="2590"/>
<dbReference type="Pharos" id="Q10471">
    <property type="development level" value="Tchem"/>
</dbReference>
<dbReference type="PRO" id="PR:Q10471"/>
<dbReference type="Proteomes" id="UP000005640">
    <property type="component" value="Chromosome 1"/>
</dbReference>
<dbReference type="RNAct" id="Q10471">
    <property type="molecule type" value="protein"/>
</dbReference>
<dbReference type="Bgee" id="ENSG00000143641">
    <property type="expression patterns" value="Expressed in descending thoracic aorta and 197 other cell types or tissues"/>
</dbReference>
<dbReference type="ExpressionAtlas" id="Q10471">
    <property type="expression patterns" value="baseline and differential"/>
</dbReference>
<dbReference type="GO" id="GO:0005789">
    <property type="term" value="C:endoplasmic reticulum membrane"/>
    <property type="evidence" value="ECO:0000304"/>
    <property type="project" value="Reactome"/>
</dbReference>
<dbReference type="GO" id="GO:0005576">
    <property type="term" value="C:extracellular region"/>
    <property type="evidence" value="ECO:0007669"/>
    <property type="project" value="UniProtKB-SubCell"/>
</dbReference>
<dbReference type="GO" id="GO:0005794">
    <property type="term" value="C:Golgi apparatus"/>
    <property type="evidence" value="ECO:0000314"/>
    <property type="project" value="BHF-UCL"/>
</dbReference>
<dbReference type="GO" id="GO:0032580">
    <property type="term" value="C:Golgi cisterna membrane"/>
    <property type="evidence" value="ECO:0007669"/>
    <property type="project" value="UniProtKB-SubCell"/>
</dbReference>
<dbReference type="GO" id="GO:0000139">
    <property type="term" value="C:Golgi membrane"/>
    <property type="evidence" value="ECO:0000304"/>
    <property type="project" value="Reactome"/>
</dbReference>
<dbReference type="GO" id="GO:0005795">
    <property type="term" value="C:Golgi stack"/>
    <property type="evidence" value="ECO:0000314"/>
    <property type="project" value="BHF-UCL"/>
</dbReference>
<dbReference type="GO" id="GO:0016020">
    <property type="term" value="C:membrane"/>
    <property type="evidence" value="ECO:0007005"/>
    <property type="project" value="UniProtKB"/>
</dbReference>
<dbReference type="GO" id="GO:0048471">
    <property type="term" value="C:perinuclear region of cytoplasm"/>
    <property type="evidence" value="ECO:0000314"/>
    <property type="project" value="BHF-UCL"/>
</dbReference>
<dbReference type="GO" id="GO:0030246">
    <property type="term" value="F:carbohydrate binding"/>
    <property type="evidence" value="ECO:0007669"/>
    <property type="project" value="UniProtKB-KW"/>
</dbReference>
<dbReference type="GO" id="GO:0030145">
    <property type="term" value="F:manganese ion binding"/>
    <property type="evidence" value="ECO:0000314"/>
    <property type="project" value="UniProtKB"/>
</dbReference>
<dbReference type="GO" id="GO:0004653">
    <property type="term" value="F:polypeptide N-acetylgalactosaminyltransferase activity"/>
    <property type="evidence" value="ECO:0000314"/>
    <property type="project" value="UniProtKB"/>
</dbReference>
<dbReference type="GO" id="GO:0016266">
    <property type="term" value="P:O-glycan processing"/>
    <property type="evidence" value="ECO:0000314"/>
    <property type="project" value="GO_Central"/>
</dbReference>
<dbReference type="GO" id="GO:0002639">
    <property type="term" value="P:positive regulation of immunoglobulin production"/>
    <property type="evidence" value="ECO:0000314"/>
    <property type="project" value="BHF-UCL"/>
</dbReference>
<dbReference type="GO" id="GO:0051604">
    <property type="term" value="P:protein maturation"/>
    <property type="evidence" value="ECO:0000314"/>
    <property type="project" value="BHF-UCL"/>
</dbReference>
<dbReference type="GO" id="GO:0006493">
    <property type="term" value="P:protein O-linked glycosylation"/>
    <property type="evidence" value="ECO:0000314"/>
    <property type="project" value="UniProtKB"/>
</dbReference>
<dbReference type="GO" id="GO:0018242">
    <property type="term" value="P:protein O-linked glycosylation via serine"/>
    <property type="evidence" value="ECO:0000314"/>
    <property type="project" value="BHF-UCL"/>
</dbReference>
<dbReference type="GO" id="GO:0018243">
    <property type="term" value="P:protein O-linked glycosylation via threonine"/>
    <property type="evidence" value="ECO:0000314"/>
    <property type="project" value="BHF-UCL"/>
</dbReference>
<dbReference type="CDD" id="cd23434">
    <property type="entry name" value="beta-trefoil_Ricin_GALNT2"/>
    <property type="match status" value="1"/>
</dbReference>
<dbReference type="CDD" id="cd02510">
    <property type="entry name" value="pp-GalNAc-T"/>
    <property type="match status" value="1"/>
</dbReference>
<dbReference type="FunFam" id="2.80.10.50:FF:000018">
    <property type="entry name" value="Polypeptide N-acetylgalactosaminyltransferase"/>
    <property type="match status" value="1"/>
</dbReference>
<dbReference type="FunFam" id="3.90.550.10:FF:000026">
    <property type="entry name" value="Polypeptide N-acetylgalactosaminyltransferase"/>
    <property type="match status" value="1"/>
</dbReference>
<dbReference type="Gene3D" id="2.80.10.50">
    <property type="match status" value="1"/>
</dbReference>
<dbReference type="Gene3D" id="3.90.550.10">
    <property type="entry name" value="Spore Coat Polysaccharide Biosynthesis Protein SpsA, Chain A"/>
    <property type="match status" value="1"/>
</dbReference>
<dbReference type="InterPro" id="IPR045885">
    <property type="entry name" value="GalNAc-T"/>
</dbReference>
<dbReference type="InterPro" id="IPR001173">
    <property type="entry name" value="Glyco_trans_2-like"/>
</dbReference>
<dbReference type="InterPro" id="IPR029044">
    <property type="entry name" value="Nucleotide-diphossugar_trans"/>
</dbReference>
<dbReference type="InterPro" id="IPR035992">
    <property type="entry name" value="Ricin_B-like_lectins"/>
</dbReference>
<dbReference type="InterPro" id="IPR000772">
    <property type="entry name" value="Ricin_B_lectin"/>
</dbReference>
<dbReference type="PANTHER" id="PTHR11675">
    <property type="entry name" value="N-ACETYLGALACTOSAMINYLTRANSFERASE"/>
    <property type="match status" value="1"/>
</dbReference>
<dbReference type="PANTHER" id="PTHR11675:SF49">
    <property type="entry name" value="POLYPEPTIDE N-ACETYLGALACTOSAMINYLTRANSFERASE 2"/>
    <property type="match status" value="1"/>
</dbReference>
<dbReference type="Pfam" id="PF00535">
    <property type="entry name" value="Glycos_transf_2"/>
    <property type="match status" value="1"/>
</dbReference>
<dbReference type="Pfam" id="PF00652">
    <property type="entry name" value="Ricin_B_lectin"/>
    <property type="match status" value="1"/>
</dbReference>
<dbReference type="SMART" id="SM00458">
    <property type="entry name" value="RICIN"/>
    <property type="match status" value="1"/>
</dbReference>
<dbReference type="SUPFAM" id="SSF53448">
    <property type="entry name" value="Nucleotide-diphospho-sugar transferases"/>
    <property type="match status" value="1"/>
</dbReference>
<dbReference type="SUPFAM" id="SSF50370">
    <property type="entry name" value="Ricin B-like lectins"/>
    <property type="match status" value="1"/>
</dbReference>
<dbReference type="PROSITE" id="PS50231">
    <property type="entry name" value="RICIN_B_LECTIN"/>
    <property type="match status" value="1"/>
</dbReference>
<keyword id="KW-0002">3D-structure</keyword>
<keyword id="KW-0025">Alternative splicing</keyword>
<keyword id="KW-0900">Congenital disorder of glycosylation</keyword>
<keyword id="KW-0903">Direct protein sequencing</keyword>
<keyword id="KW-0225">Disease variant</keyword>
<keyword id="KW-1015">Disulfide bond</keyword>
<keyword id="KW-0325">Glycoprotein</keyword>
<keyword id="KW-0328">Glycosyltransferase</keyword>
<keyword id="KW-0333">Golgi apparatus</keyword>
<keyword id="KW-0430">Lectin</keyword>
<keyword id="KW-0464">Manganese</keyword>
<keyword id="KW-0472">Membrane</keyword>
<keyword id="KW-0479">Metal-binding</keyword>
<keyword id="KW-0597">Phosphoprotein</keyword>
<keyword id="KW-0654">Proteoglycan</keyword>
<keyword id="KW-1267">Proteomics identification</keyword>
<keyword id="KW-1185">Reference proteome</keyword>
<keyword id="KW-0964">Secreted</keyword>
<keyword id="KW-0735">Signal-anchor</keyword>
<keyword id="KW-0808">Transferase</keyword>
<keyword id="KW-0812">Transmembrane</keyword>
<keyword id="KW-1133">Transmembrane helix</keyword>
<accession>Q10471</accession>
<accession>A8K1Y3</accession>
<accession>B7Z8V8</accession>
<accession>C5HU00</accession>
<accession>Q9NPY4</accession>